<evidence type="ECO:0000255" key="1">
    <source>
        <dbReference type="HAMAP-Rule" id="MF_01445"/>
    </source>
</evidence>
<gene>
    <name evidence="1" type="primary">tsaD</name>
    <name type="synonym">gcp</name>
    <name type="ordered locus">JJD26997_0366</name>
</gene>
<reference key="1">
    <citation type="submission" date="2007-07" db="EMBL/GenBank/DDBJ databases">
        <title>Complete genome sequence of Campylobacter jejuni subsp doylei 269.97 isolated from human blood.</title>
        <authorList>
            <person name="Fouts D.E."/>
            <person name="Mongodin E.F."/>
            <person name="Puiu D."/>
            <person name="Sebastian Y."/>
            <person name="Miller W.G."/>
            <person name="Mandrell R.E."/>
            <person name="Lastovica A.J."/>
            <person name="Nelson K.E."/>
        </authorList>
    </citation>
    <scope>NUCLEOTIDE SEQUENCE [LARGE SCALE GENOMIC DNA]</scope>
    <source>
        <strain>ATCC BAA-1458 / RM4099 / 269.97</strain>
    </source>
</reference>
<sequence>MKNLILAIESSCDDSSIAIIDKNTLECKFHKKISQELEHSIYGGVVPELAARLHSEALPKILKQSKKYFKNLCAIAVTNEPGLSVSLLGGISMAKTLASALNLPLIPINHLKGHIYSLFLEEKISLDRGILLVSGGHTMVLYLKDDANLELLASTNDDSFGESFDKVAKMMNLGYPGGVIIENLAKNAKLKNISFNTPLKHSKELAFSFSGLKNAVRLEILKHENLNEDTKAEIAYAFENTACDHIMDKLEKIFNLYKFKNFGVVGGASANLNLRSRLQNLCQKYNANLKLAPLKFCSDNALMIARAAVDAYEKKEFVSIEEDILSPKNKNFSRI</sequence>
<proteinExistence type="inferred from homology"/>
<protein>
    <recommendedName>
        <fullName evidence="1">tRNA N6-adenosine threonylcarbamoyltransferase</fullName>
        <ecNumber evidence="1">2.3.1.234</ecNumber>
    </recommendedName>
    <alternativeName>
        <fullName evidence="1">N6-L-threonylcarbamoyladenine synthase</fullName>
        <shortName evidence="1">t(6)A synthase</shortName>
    </alternativeName>
    <alternativeName>
        <fullName evidence="1">t(6)A37 threonylcarbamoyladenosine biosynthesis protein TsaD</fullName>
    </alternativeName>
    <alternativeName>
        <fullName evidence="1">tRNA threonylcarbamoyladenosine biosynthesis protein TsaD</fullName>
    </alternativeName>
</protein>
<dbReference type="EC" id="2.3.1.234" evidence="1"/>
<dbReference type="EMBL" id="CP000768">
    <property type="protein sequence ID" value="ABS43504.1"/>
    <property type="molecule type" value="Genomic_DNA"/>
</dbReference>
<dbReference type="SMR" id="A7H245"/>
<dbReference type="KEGG" id="cjd:JJD26997_0366"/>
<dbReference type="HOGENOM" id="CLU_023208_0_3_7"/>
<dbReference type="Proteomes" id="UP000002302">
    <property type="component" value="Chromosome"/>
</dbReference>
<dbReference type="GO" id="GO:0005737">
    <property type="term" value="C:cytoplasm"/>
    <property type="evidence" value="ECO:0007669"/>
    <property type="project" value="UniProtKB-SubCell"/>
</dbReference>
<dbReference type="GO" id="GO:0005506">
    <property type="term" value="F:iron ion binding"/>
    <property type="evidence" value="ECO:0007669"/>
    <property type="project" value="UniProtKB-UniRule"/>
</dbReference>
<dbReference type="GO" id="GO:0061711">
    <property type="term" value="F:N(6)-L-threonylcarbamoyladenine synthase activity"/>
    <property type="evidence" value="ECO:0007669"/>
    <property type="project" value="UniProtKB-EC"/>
</dbReference>
<dbReference type="GO" id="GO:0002949">
    <property type="term" value="P:tRNA threonylcarbamoyladenosine modification"/>
    <property type="evidence" value="ECO:0007669"/>
    <property type="project" value="UniProtKB-UniRule"/>
</dbReference>
<dbReference type="Gene3D" id="3.30.420.40">
    <property type="match status" value="2"/>
</dbReference>
<dbReference type="HAMAP" id="MF_01445">
    <property type="entry name" value="TsaD"/>
    <property type="match status" value="1"/>
</dbReference>
<dbReference type="InterPro" id="IPR043129">
    <property type="entry name" value="ATPase_NBD"/>
</dbReference>
<dbReference type="InterPro" id="IPR000905">
    <property type="entry name" value="Gcp-like_dom"/>
</dbReference>
<dbReference type="InterPro" id="IPR017861">
    <property type="entry name" value="KAE1/TsaD"/>
</dbReference>
<dbReference type="InterPro" id="IPR017860">
    <property type="entry name" value="Peptidase_M22_CS"/>
</dbReference>
<dbReference type="InterPro" id="IPR022450">
    <property type="entry name" value="TsaD"/>
</dbReference>
<dbReference type="NCBIfam" id="TIGR00329">
    <property type="entry name" value="gcp_kae1"/>
    <property type="match status" value="1"/>
</dbReference>
<dbReference type="NCBIfam" id="TIGR03723">
    <property type="entry name" value="T6A_TsaD_YgjD"/>
    <property type="match status" value="1"/>
</dbReference>
<dbReference type="PANTHER" id="PTHR11735">
    <property type="entry name" value="TRNA N6-ADENOSINE THREONYLCARBAMOYLTRANSFERASE"/>
    <property type="match status" value="1"/>
</dbReference>
<dbReference type="PANTHER" id="PTHR11735:SF6">
    <property type="entry name" value="TRNA N6-ADENOSINE THREONYLCARBAMOYLTRANSFERASE, MITOCHONDRIAL"/>
    <property type="match status" value="1"/>
</dbReference>
<dbReference type="Pfam" id="PF00814">
    <property type="entry name" value="TsaD"/>
    <property type="match status" value="1"/>
</dbReference>
<dbReference type="PRINTS" id="PR00789">
    <property type="entry name" value="OSIALOPTASE"/>
</dbReference>
<dbReference type="SUPFAM" id="SSF53067">
    <property type="entry name" value="Actin-like ATPase domain"/>
    <property type="match status" value="2"/>
</dbReference>
<dbReference type="PROSITE" id="PS01016">
    <property type="entry name" value="GLYCOPROTEASE"/>
    <property type="match status" value="1"/>
</dbReference>
<organism>
    <name type="scientific">Campylobacter jejuni subsp. doylei (strain ATCC BAA-1458 / RM4099 / 269.97)</name>
    <dbReference type="NCBI Taxonomy" id="360109"/>
    <lineage>
        <taxon>Bacteria</taxon>
        <taxon>Pseudomonadati</taxon>
        <taxon>Campylobacterota</taxon>
        <taxon>Epsilonproteobacteria</taxon>
        <taxon>Campylobacterales</taxon>
        <taxon>Campylobacteraceae</taxon>
        <taxon>Campylobacter</taxon>
    </lineage>
</organism>
<name>TSAD_CAMJD</name>
<accession>A7H245</accession>
<comment type="function">
    <text evidence="1">Required for the formation of a threonylcarbamoyl group on adenosine at position 37 (t(6)A37) in tRNAs that read codons beginning with adenine. Is involved in the transfer of the threonylcarbamoyl moiety of threonylcarbamoyl-AMP (TC-AMP) to the N6 group of A37, together with TsaE and TsaB. TsaD likely plays a direct catalytic role in this reaction.</text>
</comment>
<comment type="catalytic activity">
    <reaction evidence="1">
        <text>L-threonylcarbamoyladenylate + adenosine(37) in tRNA = N(6)-L-threonylcarbamoyladenosine(37) in tRNA + AMP + H(+)</text>
        <dbReference type="Rhea" id="RHEA:37059"/>
        <dbReference type="Rhea" id="RHEA-COMP:10162"/>
        <dbReference type="Rhea" id="RHEA-COMP:10163"/>
        <dbReference type="ChEBI" id="CHEBI:15378"/>
        <dbReference type="ChEBI" id="CHEBI:73682"/>
        <dbReference type="ChEBI" id="CHEBI:74411"/>
        <dbReference type="ChEBI" id="CHEBI:74418"/>
        <dbReference type="ChEBI" id="CHEBI:456215"/>
        <dbReference type="EC" id="2.3.1.234"/>
    </reaction>
</comment>
<comment type="cofactor">
    <cofactor evidence="1">
        <name>Fe(2+)</name>
        <dbReference type="ChEBI" id="CHEBI:29033"/>
    </cofactor>
    <text evidence="1">Binds 1 Fe(2+) ion per subunit.</text>
</comment>
<comment type="subcellular location">
    <subcellularLocation>
        <location evidence="1">Cytoplasm</location>
    </subcellularLocation>
</comment>
<comment type="similarity">
    <text evidence="1">Belongs to the KAE1 / TsaD family.</text>
</comment>
<feature type="chain" id="PRO_1000024428" description="tRNA N6-adenosine threonylcarbamoyltransferase">
    <location>
        <begin position="1"/>
        <end position="335"/>
    </location>
</feature>
<feature type="binding site" evidence="1">
    <location>
        <position position="110"/>
    </location>
    <ligand>
        <name>Fe cation</name>
        <dbReference type="ChEBI" id="CHEBI:24875"/>
    </ligand>
</feature>
<feature type="binding site" evidence="1">
    <location>
        <position position="114"/>
    </location>
    <ligand>
        <name>Fe cation</name>
        <dbReference type="ChEBI" id="CHEBI:24875"/>
    </ligand>
</feature>
<feature type="binding site" evidence="1">
    <location>
        <begin position="132"/>
        <end position="136"/>
    </location>
    <ligand>
        <name>substrate</name>
    </ligand>
</feature>
<feature type="binding site" evidence="1">
    <location>
        <position position="165"/>
    </location>
    <ligand>
        <name>substrate</name>
    </ligand>
</feature>
<feature type="binding site" evidence="1">
    <location>
        <position position="178"/>
    </location>
    <ligand>
        <name>substrate</name>
    </ligand>
</feature>
<feature type="binding site" evidence="1">
    <location>
        <position position="271"/>
    </location>
    <ligand>
        <name>substrate</name>
    </ligand>
</feature>
<feature type="binding site" evidence="1">
    <location>
        <position position="299"/>
    </location>
    <ligand>
        <name>Fe cation</name>
        <dbReference type="ChEBI" id="CHEBI:24875"/>
    </ligand>
</feature>
<keyword id="KW-0012">Acyltransferase</keyword>
<keyword id="KW-0963">Cytoplasm</keyword>
<keyword id="KW-0408">Iron</keyword>
<keyword id="KW-0479">Metal-binding</keyword>
<keyword id="KW-0808">Transferase</keyword>
<keyword id="KW-0819">tRNA processing</keyword>